<feature type="chain" id="PRO_1000058453" description="Glycerol kinase">
    <location>
        <begin position="1"/>
        <end position="502"/>
    </location>
</feature>
<feature type="binding site" evidence="1">
    <location>
        <position position="13"/>
    </location>
    <ligand>
        <name>ADP</name>
        <dbReference type="ChEBI" id="CHEBI:456216"/>
    </ligand>
</feature>
<feature type="binding site" evidence="1">
    <location>
        <position position="13"/>
    </location>
    <ligand>
        <name>ATP</name>
        <dbReference type="ChEBI" id="CHEBI:30616"/>
    </ligand>
</feature>
<feature type="binding site" evidence="1">
    <location>
        <position position="13"/>
    </location>
    <ligand>
        <name>sn-glycerol 3-phosphate</name>
        <dbReference type="ChEBI" id="CHEBI:57597"/>
    </ligand>
</feature>
<feature type="binding site" evidence="1">
    <location>
        <position position="14"/>
    </location>
    <ligand>
        <name>ATP</name>
        <dbReference type="ChEBI" id="CHEBI:30616"/>
    </ligand>
</feature>
<feature type="binding site" evidence="1">
    <location>
        <position position="15"/>
    </location>
    <ligand>
        <name>ATP</name>
        <dbReference type="ChEBI" id="CHEBI:30616"/>
    </ligand>
</feature>
<feature type="binding site" evidence="1">
    <location>
        <position position="17"/>
    </location>
    <ligand>
        <name>ADP</name>
        <dbReference type="ChEBI" id="CHEBI:456216"/>
    </ligand>
</feature>
<feature type="binding site" evidence="1">
    <location>
        <position position="83"/>
    </location>
    <ligand>
        <name>glycerol</name>
        <dbReference type="ChEBI" id="CHEBI:17754"/>
    </ligand>
</feature>
<feature type="binding site" evidence="1">
    <location>
        <position position="83"/>
    </location>
    <ligand>
        <name>sn-glycerol 3-phosphate</name>
        <dbReference type="ChEBI" id="CHEBI:57597"/>
    </ligand>
</feature>
<feature type="binding site" evidence="1">
    <location>
        <position position="84"/>
    </location>
    <ligand>
        <name>glycerol</name>
        <dbReference type="ChEBI" id="CHEBI:17754"/>
    </ligand>
</feature>
<feature type="binding site" evidence="1">
    <location>
        <position position="84"/>
    </location>
    <ligand>
        <name>sn-glycerol 3-phosphate</name>
        <dbReference type="ChEBI" id="CHEBI:57597"/>
    </ligand>
</feature>
<feature type="binding site" evidence="1">
    <location>
        <position position="136"/>
    </location>
    <ligand>
        <name>glycerol</name>
        <dbReference type="ChEBI" id="CHEBI:17754"/>
    </ligand>
</feature>
<feature type="binding site" evidence="1">
    <location>
        <position position="136"/>
    </location>
    <ligand>
        <name>sn-glycerol 3-phosphate</name>
        <dbReference type="ChEBI" id="CHEBI:57597"/>
    </ligand>
</feature>
<feature type="binding site" evidence="1">
    <location>
        <position position="246"/>
    </location>
    <ligand>
        <name>glycerol</name>
        <dbReference type="ChEBI" id="CHEBI:17754"/>
    </ligand>
</feature>
<feature type="binding site" evidence="1">
    <location>
        <position position="246"/>
    </location>
    <ligand>
        <name>sn-glycerol 3-phosphate</name>
        <dbReference type="ChEBI" id="CHEBI:57597"/>
    </ligand>
</feature>
<feature type="binding site" evidence="1">
    <location>
        <position position="247"/>
    </location>
    <ligand>
        <name>glycerol</name>
        <dbReference type="ChEBI" id="CHEBI:17754"/>
    </ligand>
</feature>
<feature type="binding site" evidence="1">
    <location>
        <position position="268"/>
    </location>
    <ligand>
        <name>ADP</name>
        <dbReference type="ChEBI" id="CHEBI:456216"/>
    </ligand>
</feature>
<feature type="binding site" evidence="1">
    <location>
        <position position="268"/>
    </location>
    <ligand>
        <name>ATP</name>
        <dbReference type="ChEBI" id="CHEBI:30616"/>
    </ligand>
</feature>
<feature type="binding site" evidence="1">
    <location>
        <position position="311"/>
    </location>
    <ligand>
        <name>ADP</name>
        <dbReference type="ChEBI" id="CHEBI:456216"/>
    </ligand>
</feature>
<feature type="binding site" evidence="1">
    <location>
        <position position="311"/>
    </location>
    <ligand>
        <name>ATP</name>
        <dbReference type="ChEBI" id="CHEBI:30616"/>
    </ligand>
</feature>
<feature type="binding site" evidence="1">
    <location>
        <position position="315"/>
    </location>
    <ligand>
        <name>ATP</name>
        <dbReference type="ChEBI" id="CHEBI:30616"/>
    </ligand>
</feature>
<feature type="binding site" evidence="1">
    <location>
        <position position="412"/>
    </location>
    <ligand>
        <name>ADP</name>
        <dbReference type="ChEBI" id="CHEBI:456216"/>
    </ligand>
</feature>
<feature type="binding site" evidence="1">
    <location>
        <position position="412"/>
    </location>
    <ligand>
        <name>ATP</name>
        <dbReference type="ChEBI" id="CHEBI:30616"/>
    </ligand>
</feature>
<feature type="binding site" evidence="1">
    <location>
        <position position="416"/>
    </location>
    <ligand>
        <name>ADP</name>
        <dbReference type="ChEBI" id="CHEBI:456216"/>
    </ligand>
</feature>
<comment type="function">
    <text evidence="1">Key enzyme in the regulation of glycerol uptake and metabolism. Catalyzes the phosphorylation of glycerol to yield sn-glycerol 3-phosphate.</text>
</comment>
<comment type="catalytic activity">
    <reaction evidence="1">
        <text>glycerol + ATP = sn-glycerol 3-phosphate + ADP + H(+)</text>
        <dbReference type="Rhea" id="RHEA:21644"/>
        <dbReference type="ChEBI" id="CHEBI:15378"/>
        <dbReference type="ChEBI" id="CHEBI:17754"/>
        <dbReference type="ChEBI" id="CHEBI:30616"/>
        <dbReference type="ChEBI" id="CHEBI:57597"/>
        <dbReference type="ChEBI" id="CHEBI:456216"/>
        <dbReference type="EC" id="2.7.1.30"/>
    </reaction>
</comment>
<comment type="activity regulation">
    <text evidence="1">Inhibited by fructose 1,6-bisphosphate (FBP).</text>
</comment>
<comment type="pathway">
    <text evidence="1">Polyol metabolism; glycerol degradation via glycerol kinase pathway; sn-glycerol 3-phosphate from glycerol: step 1/1.</text>
</comment>
<comment type="similarity">
    <text evidence="1">Belongs to the FGGY kinase family.</text>
</comment>
<protein>
    <recommendedName>
        <fullName evidence="1">Glycerol kinase</fullName>
        <ecNumber evidence="1">2.7.1.30</ecNumber>
    </recommendedName>
    <alternativeName>
        <fullName evidence="1">ATP:glycerol 3-phosphotransferase</fullName>
    </alternativeName>
    <alternativeName>
        <fullName evidence="1">Glycerokinase</fullName>
        <shortName evidence="1">GK</shortName>
    </alternativeName>
</protein>
<sequence length="502" mass="55704">MSTDFILAVDQGTTSSRAIIFDKKGNIRKIAQKEFTQIYPKSGWVEHDAMEIWGTQSGVMREALEFGRVKPDQIAAIGITNQRETVVVWDKETGDPVYNAIVWQCRRTSSICDEIKRDPQFVKYIKENTGLVVDAYFSGTKVKWILDNVEGAREKANAGKLLMGTIDTWLIWNLTRGKVHATDYSNASRTMLFNINSLEWDKKILDYLNIPESMLPEVKNSSEVFGVTDSHTLGGAEIPIAGVAGDQHAALFGHCCFEKGMAKNTYGTGCFALMNVGDKPVYSDEGLLTTIAWAENGKPTYALEGSVFIAGAVIQWIRDGLGLVRSAEDSEYYATKIDSTNGVYLVPAFVGLGTPYWDMYARGTIVGITRDTKREHIIRAALEAIAYQAKDVLECMKEDTGLDLAGLRVDGGAVQNNFLMQFQSDILQSEISKPKINEITGLGAVFLAGLAVGFWKDKQELKSILTTEKVFEPQKDSQAVAHDYRGWKKAVERSKAWAECYS</sequence>
<dbReference type="EC" id="2.7.1.30" evidence="1"/>
<dbReference type="EMBL" id="CP000608">
    <property type="protein sequence ID" value="ABO46187.1"/>
    <property type="molecule type" value="Genomic_DNA"/>
</dbReference>
<dbReference type="RefSeq" id="WP_003024782.1">
    <property type="nucleotide sequence ID" value="NC_009257.1"/>
</dbReference>
<dbReference type="SMR" id="A4IW85"/>
<dbReference type="KEGG" id="ftw:FTW_0219"/>
<dbReference type="HOGENOM" id="CLU_009281_2_3_6"/>
<dbReference type="UniPathway" id="UPA00618">
    <property type="reaction ID" value="UER00672"/>
</dbReference>
<dbReference type="GO" id="GO:0005829">
    <property type="term" value="C:cytosol"/>
    <property type="evidence" value="ECO:0007669"/>
    <property type="project" value="TreeGrafter"/>
</dbReference>
<dbReference type="GO" id="GO:0005524">
    <property type="term" value="F:ATP binding"/>
    <property type="evidence" value="ECO:0007669"/>
    <property type="project" value="UniProtKB-UniRule"/>
</dbReference>
<dbReference type="GO" id="GO:0004370">
    <property type="term" value="F:glycerol kinase activity"/>
    <property type="evidence" value="ECO:0000250"/>
    <property type="project" value="UniProtKB"/>
</dbReference>
<dbReference type="GO" id="GO:0019563">
    <property type="term" value="P:glycerol catabolic process"/>
    <property type="evidence" value="ECO:0007669"/>
    <property type="project" value="UniProtKB-UniRule"/>
</dbReference>
<dbReference type="GO" id="GO:0006071">
    <property type="term" value="P:glycerol metabolic process"/>
    <property type="evidence" value="ECO:0000250"/>
    <property type="project" value="UniProtKB"/>
</dbReference>
<dbReference type="GO" id="GO:0006072">
    <property type="term" value="P:glycerol-3-phosphate metabolic process"/>
    <property type="evidence" value="ECO:0007669"/>
    <property type="project" value="InterPro"/>
</dbReference>
<dbReference type="CDD" id="cd07786">
    <property type="entry name" value="FGGY_EcGK_like"/>
    <property type="match status" value="1"/>
</dbReference>
<dbReference type="FunFam" id="3.30.420.40:FF:000007">
    <property type="entry name" value="Glycerol kinase"/>
    <property type="match status" value="1"/>
</dbReference>
<dbReference type="FunFam" id="3.30.420.40:FF:000008">
    <property type="entry name" value="Glycerol kinase"/>
    <property type="match status" value="1"/>
</dbReference>
<dbReference type="Gene3D" id="3.30.420.40">
    <property type="match status" value="2"/>
</dbReference>
<dbReference type="HAMAP" id="MF_00186">
    <property type="entry name" value="Glycerol_kin"/>
    <property type="match status" value="1"/>
</dbReference>
<dbReference type="InterPro" id="IPR043129">
    <property type="entry name" value="ATPase_NBD"/>
</dbReference>
<dbReference type="InterPro" id="IPR000577">
    <property type="entry name" value="Carb_kinase_FGGY"/>
</dbReference>
<dbReference type="InterPro" id="IPR018483">
    <property type="entry name" value="Carb_kinase_FGGY_CS"/>
</dbReference>
<dbReference type="InterPro" id="IPR018485">
    <property type="entry name" value="FGGY_C"/>
</dbReference>
<dbReference type="InterPro" id="IPR018484">
    <property type="entry name" value="FGGY_N"/>
</dbReference>
<dbReference type="InterPro" id="IPR005999">
    <property type="entry name" value="Glycerol_kin"/>
</dbReference>
<dbReference type="NCBIfam" id="TIGR01311">
    <property type="entry name" value="glycerol_kin"/>
    <property type="match status" value="1"/>
</dbReference>
<dbReference type="NCBIfam" id="NF000756">
    <property type="entry name" value="PRK00047.1"/>
    <property type="match status" value="1"/>
</dbReference>
<dbReference type="PANTHER" id="PTHR10196:SF69">
    <property type="entry name" value="GLYCEROL KINASE"/>
    <property type="match status" value="1"/>
</dbReference>
<dbReference type="PANTHER" id="PTHR10196">
    <property type="entry name" value="SUGAR KINASE"/>
    <property type="match status" value="1"/>
</dbReference>
<dbReference type="Pfam" id="PF02782">
    <property type="entry name" value="FGGY_C"/>
    <property type="match status" value="1"/>
</dbReference>
<dbReference type="Pfam" id="PF00370">
    <property type="entry name" value="FGGY_N"/>
    <property type="match status" value="1"/>
</dbReference>
<dbReference type="PIRSF" id="PIRSF000538">
    <property type="entry name" value="GlpK"/>
    <property type="match status" value="1"/>
</dbReference>
<dbReference type="SUPFAM" id="SSF53067">
    <property type="entry name" value="Actin-like ATPase domain"/>
    <property type="match status" value="2"/>
</dbReference>
<dbReference type="PROSITE" id="PS00933">
    <property type="entry name" value="FGGY_KINASES_1"/>
    <property type="match status" value="1"/>
</dbReference>
<dbReference type="PROSITE" id="PS00445">
    <property type="entry name" value="FGGY_KINASES_2"/>
    <property type="match status" value="1"/>
</dbReference>
<reference key="1">
    <citation type="journal article" date="2007" name="PLoS ONE">
        <title>Complete genomic characterization of a pathogenic A.II strain of Francisella tularensis subspecies tularensis.</title>
        <authorList>
            <person name="Beckstrom-Sternberg S.M."/>
            <person name="Auerbach R.K."/>
            <person name="Godbole S."/>
            <person name="Pearson J.V."/>
            <person name="Beckstrom-Sternberg J.S."/>
            <person name="Deng Z."/>
            <person name="Munk C."/>
            <person name="Kubota K."/>
            <person name="Zhou Y."/>
            <person name="Bruce D."/>
            <person name="Noronha J."/>
            <person name="Scheuermann R.H."/>
            <person name="Wang A."/>
            <person name="Wei X."/>
            <person name="Wang J."/>
            <person name="Hao J."/>
            <person name="Wagner D.M."/>
            <person name="Brettin T.S."/>
            <person name="Brown N."/>
            <person name="Gilna P."/>
            <person name="Keim P.S."/>
        </authorList>
    </citation>
    <scope>NUCLEOTIDE SEQUENCE [LARGE SCALE GENOMIC DNA]</scope>
    <source>
        <strain>WY96-3418</strain>
    </source>
</reference>
<accession>A4IW85</accession>
<name>GLPK_FRATW</name>
<organism>
    <name type="scientific">Francisella tularensis subsp. tularensis (strain WY96-3418)</name>
    <dbReference type="NCBI Taxonomy" id="418136"/>
    <lineage>
        <taxon>Bacteria</taxon>
        <taxon>Pseudomonadati</taxon>
        <taxon>Pseudomonadota</taxon>
        <taxon>Gammaproteobacteria</taxon>
        <taxon>Thiotrichales</taxon>
        <taxon>Francisellaceae</taxon>
        <taxon>Francisella</taxon>
    </lineage>
</organism>
<gene>
    <name evidence="1" type="primary">glpK</name>
    <name type="ordered locus">FTW_0219</name>
</gene>
<evidence type="ECO:0000255" key="1">
    <source>
        <dbReference type="HAMAP-Rule" id="MF_00186"/>
    </source>
</evidence>
<proteinExistence type="inferred from homology"/>
<keyword id="KW-0067">ATP-binding</keyword>
<keyword id="KW-0319">Glycerol metabolism</keyword>
<keyword id="KW-0418">Kinase</keyword>
<keyword id="KW-0547">Nucleotide-binding</keyword>
<keyword id="KW-0808">Transferase</keyword>